<gene>
    <name evidence="1" type="primary">cutC</name>
    <name type="ordered locus">SeAg_B1216</name>
</gene>
<organism>
    <name type="scientific">Salmonella agona (strain SL483)</name>
    <dbReference type="NCBI Taxonomy" id="454166"/>
    <lineage>
        <taxon>Bacteria</taxon>
        <taxon>Pseudomonadati</taxon>
        <taxon>Pseudomonadota</taxon>
        <taxon>Gammaproteobacteria</taxon>
        <taxon>Enterobacterales</taxon>
        <taxon>Enterobacteriaceae</taxon>
        <taxon>Salmonella</taxon>
    </lineage>
</organism>
<dbReference type="EMBL" id="CP001138">
    <property type="protein sequence ID" value="ACH48850.1"/>
    <property type="molecule type" value="Genomic_DNA"/>
</dbReference>
<dbReference type="RefSeq" id="WP_001185770.1">
    <property type="nucleotide sequence ID" value="NC_011149.1"/>
</dbReference>
<dbReference type="SMR" id="B5F3I3"/>
<dbReference type="KEGG" id="sea:SeAg_B1216"/>
<dbReference type="HOGENOM" id="CLU_050555_3_1_6"/>
<dbReference type="Proteomes" id="UP000008819">
    <property type="component" value="Chromosome"/>
</dbReference>
<dbReference type="GO" id="GO:0005737">
    <property type="term" value="C:cytoplasm"/>
    <property type="evidence" value="ECO:0007669"/>
    <property type="project" value="UniProtKB-SubCell"/>
</dbReference>
<dbReference type="GO" id="GO:0005507">
    <property type="term" value="F:copper ion binding"/>
    <property type="evidence" value="ECO:0007669"/>
    <property type="project" value="TreeGrafter"/>
</dbReference>
<dbReference type="FunFam" id="3.20.20.380:FF:000001">
    <property type="entry name" value="Copper homeostasis protein CutC"/>
    <property type="match status" value="1"/>
</dbReference>
<dbReference type="Gene3D" id="3.20.20.380">
    <property type="entry name" value="Copper homeostasis (CutC) domain"/>
    <property type="match status" value="1"/>
</dbReference>
<dbReference type="HAMAP" id="MF_00795">
    <property type="entry name" value="CutC"/>
    <property type="match status" value="1"/>
</dbReference>
<dbReference type="InterPro" id="IPR005627">
    <property type="entry name" value="CutC-like"/>
</dbReference>
<dbReference type="InterPro" id="IPR036822">
    <property type="entry name" value="CutC-like_dom_sf"/>
</dbReference>
<dbReference type="NCBIfam" id="NF008603">
    <property type="entry name" value="PRK11572.1"/>
    <property type="match status" value="1"/>
</dbReference>
<dbReference type="PANTHER" id="PTHR12598">
    <property type="entry name" value="COPPER HOMEOSTASIS PROTEIN CUTC"/>
    <property type="match status" value="1"/>
</dbReference>
<dbReference type="PANTHER" id="PTHR12598:SF0">
    <property type="entry name" value="COPPER HOMEOSTASIS PROTEIN CUTC HOMOLOG"/>
    <property type="match status" value="1"/>
</dbReference>
<dbReference type="Pfam" id="PF03932">
    <property type="entry name" value="CutC"/>
    <property type="match status" value="1"/>
</dbReference>
<dbReference type="SUPFAM" id="SSF110395">
    <property type="entry name" value="CutC-like"/>
    <property type="match status" value="1"/>
</dbReference>
<evidence type="ECO:0000255" key="1">
    <source>
        <dbReference type="HAMAP-Rule" id="MF_00795"/>
    </source>
</evidence>
<protein>
    <recommendedName>
        <fullName evidence="1">PF03932 family protein CutC</fullName>
    </recommendedName>
</protein>
<name>CUTC_SALA4</name>
<reference key="1">
    <citation type="journal article" date="2011" name="J. Bacteriol.">
        <title>Comparative genomics of 28 Salmonella enterica isolates: evidence for CRISPR-mediated adaptive sublineage evolution.</title>
        <authorList>
            <person name="Fricke W.F."/>
            <person name="Mammel M.K."/>
            <person name="McDermott P.F."/>
            <person name="Tartera C."/>
            <person name="White D.G."/>
            <person name="Leclerc J.E."/>
            <person name="Ravel J."/>
            <person name="Cebula T.A."/>
        </authorList>
    </citation>
    <scope>NUCLEOTIDE SEQUENCE [LARGE SCALE GENOMIC DNA]</scope>
    <source>
        <strain>SL483</strain>
    </source>
</reference>
<keyword id="KW-0963">Cytoplasm</keyword>
<accession>B5F3I3</accession>
<sequence>MALLEICCYSMECALTAQRNGADRIELCAAPKEGGLTPSFGVLRSVREHITIPVHPIIRPRGGDFYYTDGEFAAMLEDIRLVRELGFPGLVTGVLTVDGDVDMSRMEKIMAAAGPLAVTFHRAFDMCANPFNALKNLADAGVARVLTSGQKADAAQGLSIIMELIAQGDAPTIMAGAGVRANNLQNFLDAGVREVHSSAGVLLPSPMRYRNQGLSMSADIQADEYSRYRVEGAAVAEMKGIIVRHQAK</sequence>
<comment type="subunit">
    <text evidence="1">Homodimer.</text>
</comment>
<comment type="subcellular location">
    <subcellularLocation>
        <location evidence="1">Cytoplasm</location>
    </subcellularLocation>
</comment>
<comment type="similarity">
    <text evidence="1">Belongs to the CutC family.</text>
</comment>
<comment type="caution">
    <text evidence="1">Once thought to be involved in copper homeostasis, experiments in E.coli have shown this is not the case.</text>
</comment>
<proteinExistence type="inferred from homology"/>
<feature type="chain" id="PRO_1000133842" description="PF03932 family protein CutC">
    <location>
        <begin position="1"/>
        <end position="248"/>
    </location>
</feature>